<protein>
    <recommendedName>
        <fullName evidence="1">Bifunctional protein FolD</fullName>
    </recommendedName>
    <domain>
        <recommendedName>
            <fullName evidence="1">Methylenetetrahydrofolate dehydrogenase</fullName>
            <ecNumber evidence="1">1.5.1.5</ecNumber>
        </recommendedName>
    </domain>
    <domain>
        <recommendedName>
            <fullName evidence="1">Methenyltetrahydrofolate cyclohydrolase</fullName>
            <ecNumber evidence="1">3.5.4.9</ecNumber>
        </recommendedName>
    </domain>
</protein>
<proteinExistence type="evidence at protein level"/>
<sequence>MKILRGEEIAEKKAENLHGIIERSGLEPSLKLIQIGDNEAASIYARAKIRRGKKIGIAVDLEKYDDISMKDLLKRIDDLAKDPQINGIMIENPLPKGFDYYEIVRNIPYYKDVDALSPYNQGLIALNREFLVPATPRAVIDIMDYYGYHENTVTIVNRSPVVGRPLSMMLLNRNYTVSVCHSKTKDIGSMTRSSKIVVVAVGRPGFLNREMVTPGSVVIDVGINYVNDKVVGDANFEDLSEYVEAITPVPGGVGPITATNILENVVKAAEFQKNNL</sequence>
<feature type="chain" id="PRO_0000199318" description="Bifunctional protein FolD">
    <location>
        <begin position="1"/>
        <end position="276"/>
    </location>
</feature>
<feature type="binding site" evidence="1 2">
    <location>
        <begin position="157"/>
        <end position="159"/>
    </location>
    <ligand>
        <name>NADP(+)</name>
        <dbReference type="ChEBI" id="CHEBI:58349"/>
    </ligand>
</feature>
<feature type="binding site" evidence="1 2">
    <location>
        <position position="182"/>
    </location>
    <ligand>
        <name>NADP(+)</name>
        <dbReference type="ChEBI" id="CHEBI:58349"/>
    </ligand>
</feature>
<feature type="binding site" evidence="1 2">
    <location>
        <position position="223"/>
    </location>
    <ligand>
        <name>NADP(+)</name>
        <dbReference type="ChEBI" id="CHEBI:58349"/>
    </ligand>
</feature>
<feature type="helix" evidence="4">
    <location>
        <begin position="7"/>
        <end position="23"/>
    </location>
</feature>
<feature type="strand" evidence="4">
    <location>
        <begin position="29"/>
        <end position="36"/>
    </location>
</feature>
<feature type="helix" evidence="4">
    <location>
        <begin position="39"/>
        <end position="55"/>
    </location>
</feature>
<feature type="strand" evidence="4">
    <location>
        <begin position="58"/>
        <end position="66"/>
    </location>
</feature>
<feature type="helix" evidence="4">
    <location>
        <begin position="69"/>
        <end position="81"/>
    </location>
</feature>
<feature type="strand" evidence="4">
    <location>
        <begin position="87"/>
        <end position="90"/>
    </location>
</feature>
<feature type="helix" evidence="4">
    <location>
        <begin position="100"/>
        <end position="104"/>
    </location>
</feature>
<feature type="helix" evidence="4">
    <location>
        <begin position="109"/>
        <end position="111"/>
    </location>
</feature>
<feature type="helix" evidence="4">
    <location>
        <begin position="118"/>
        <end position="125"/>
    </location>
</feature>
<feature type="helix" evidence="4">
    <location>
        <begin position="134"/>
        <end position="146"/>
    </location>
</feature>
<feature type="strand" evidence="4">
    <location>
        <begin position="152"/>
        <end position="156"/>
    </location>
</feature>
<feature type="turn" evidence="4">
    <location>
        <begin position="160"/>
        <end position="162"/>
    </location>
</feature>
<feature type="helix" evidence="4">
    <location>
        <begin position="163"/>
        <end position="172"/>
    </location>
</feature>
<feature type="strand" evidence="4">
    <location>
        <begin position="176"/>
        <end position="180"/>
    </location>
</feature>
<feature type="helix" evidence="4">
    <location>
        <begin position="187"/>
        <end position="193"/>
    </location>
</feature>
<feature type="strand" evidence="4">
    <location>
        <begin position="194"/>
        <end position="199"/>
    </location>
</feature>
<feature type="helix" evidence="4">
    <location>
        <begin position="209"/>
        <end position="211"/>
    </location>
</feature>
<feature type="strand" evidence="4">
    <location>
        <begin position="217"/>
        <end position="220"/>
    </location>
</feature>
<feature type="strand" evidence="4">
    <location>
        <begin position="224"/>
        <end position="226"/>
    </location>
</feature>
<feature type="strand" evidence="4">
    <location>
        <begin position="229"/>
        <end position="231"/>
    </location>
</feature>
<feature type="helix" evidence="4">
    <location>
        <begin position="236"/>
        <end position="240"/>
    </location>
</feature>
<feature type="strand" evidence="4">
    <location>
        <begin position="243"/>
        <end position="246"/>
    </location>
</feature>
<feature type="turn" evidence="4">
    <location>
        <begin position="249"/>
        <end position="251"/>
    </location>
</feature>
<feature type="helix" evidence="4">
    <location>
        <begin position="254"/>
        <end position="256"/>
    </location>
</feature>
<feature type="helix" evidence="4">
    <location>
        <begin position="257"/>
        <end position="275"/>
    </location>
</feature>
<accession>Q05213</accession>
<dbReference type="EC" id="1.5.1.5" evidence="1"/>
<dbReference type="EC" id="3.5.4.9" evidence="1"/>
<dbReference type="EMBL" id="AL445065">
    <property type="protein sequence ID" value="CAC12027.1"/>
    <property type="molecule type" value="Genomic_DNA"/>
</dbReference>
<dbReference type="EMBL" id="X59788">
    <property type="protein sequence ID" value="CAA42451.1"/>
    <property type="status" value="ALT_FRAME"/>
    <property type="molecule type" value="Genomic_DNA"/>
</dbReference>
<dbReference type="PIR" id="S29789">
    <property type="entry name" value="S29789"/>
</dbReference>
<dbReference type="PDB" id="3NGL">
    <property type="method" value="X-ray"/>
    <property type="resolution" value="2.40 A"/>
    <property type="chains" value="A/C=1-276"/>
</dbReference>
<dbReference type="PDB" id="3NGX">
    <property type="method" value="X-ray"/>
    <property type="resolution" value="2.30 A"/>
    <property type="chains" value="A/B=1-276"/>
</dbReference>
<dbReference type="PDBsum" id="3NGL"/>
<dbReference type="PDBsum" id="3NGX"/>
<dbReference type="SMR" id="Q05213"/>
<dbReference type="STRING" id="273075.gene:9572113"/>
<dbReference type="PaxDb" id="273075-Ta0898"/>
<dbReference type="EnsemblBacteria" id="CAC12027">
    <property type="protein sequence ID" value="CAC12027"/>
    <property type="gene ID" value="CAC12027"/>
</dbReference>
<dbReference type="KEGG" id="tac:Ta0898"/>
<dbReference type="eggNOG" id="arCOG04538">
    <property type="taxonomic scope" value="Archaea"/>
</dbReference>
<dbReference type="HOGENOM" id="CLU_034045_0_0_2"/>
<dbReference type="InParanoid" id="Q05213"/>
<dbReference type="OrthoDB" id="9455at2157"/>
<dbReference type="BRENDA" id="1.5.1.5">
    <property type="organism ID" value="6324"/>
</dbReference>
<dbReference type="BRENDA" id="3.5.4.9">
    <property type="organism ID" value="6324"/>
</dbReference>
<dbReference type="UniPathway" id="UPA00193"/>
<dbReference type="EvolutionaryTrace" id="Q05213"/>
<dbReference type="Proteomes" id="UP000001024">
    <property type="component" value="Chromosome"/>
</dbReference>
<dbReference type="GO" id="GO:0005829">
    <property type="term" value="C:cytosol"/>
    <property type="evidence" value="ECO:0007669"/>
    <property type="project" value="TreeGrafter"/>
</dbReference>
<dbReference type="GO" id="GO:0004477">
    <property type="term" value="F:methenyltetrahydrofolate cyclohydrolase activity"/>
    <property type="evidence" value="ECO:0007669"/>
    <property type="project" value="UniProtKB-UniRule"/>
</dbReference>
<dbReference type="GO" id="GO:0004488">
    <property type="term" value="F:methylenetetrahydrofolate dehydrogenase (NADP+) activity"/>
    <property type="evidence" value="ECO:0007669"/>
    <property type="project" value="UniProtKB-UniRule"/>
</dbReference>
<dbReference type="GO" id="GO:0000105">
    <property type="term" value="P:L-histidine biosynthetic process"/>
    <property type="evidence" value="ECO:0007669"/>
    <property type="project" value="UniProtKB-KW"/>
</dbReference>
<dbReference type="GO" id="GO:0009086">
    <property type="term" value="P:methionine biosynthetic process"/>
    <property type="evidence" value="ECO:0007669"/>
    <property type="project" value="UniProtKB-KW"/>
</dbReference>
<dbReference type="GO" id="GO:0006164">
    <property type="term" value="P:purine nucleotide biosynthetic process"/>
    <property type="evidence" value="ECO:0007669"/>
    <property type="project" value="UniProtKB-KW"/>
</dbReference>
<dbReference type="GO" id="GO:0035999">
    <property type="term" value="P:tetrahydrofolate interconversion"/>
    <property type="evidence" value="ECO:0007669"/>
    <property type="project" value="UniProtKB-UniRule"/>
</dbReference>
<dbReference type="CDD" id="cd01080">
    <property type="entry name" value="NAD_bind_m-THF_DH_Cyclohyd"/>
    <property type="match status" value="1"/>
</dbReference>
<dbReference type="Gene3D" id="3.40.50.10860">
    <property type="entry name" value="Leucine Dehydrogenase, chain A, domain 1"/>
    <property type="match status" value="1"/>
</dbReference>
<dbReference type="Gene3D" id="3.40.50.720">
    <property type="entry name" value="NAD(P)-binding Rossmann-like Domain"/>
    <property type="match status" value="1"/>
</dbReference>
<dbReference type="HAMAP" id="MF_01576">
    <property type="entry name" value="THF_DHG_CYH"/>
    <property type="match status" value="1"/>
</dbReference>
<dbReference type="InterPro" id="IPR046346">
    <property type="entry name" value="Aminoacid_DH-like_N_sf"/>
</dbReference>
<dbReference type="InterPro" id="IPR054993">
    <property type="entry name" value="FolD_Thplmales"/>
</dbReference>
<dbReference type="InterPro" id="IPR036291">
    <property type="entry name" value="NAD(P)-bd_dom_sf"/>
</dbReference>
<dbReference type="InterPro" id="IPR000672">
    <property type="entry name" value="THF_DH/CycHdrlase"/>
</dbReference>
<dbReference type="InterPro" id="IPR020630">
    <property type="entry name" value="THF_DH/CycHdrlase_cat_dom"/>
</dbReference>
<dbReference type="InterPro" id="IPR020867">
    <property type="entry name" value="THF_DH/CycHdrlase_CS"/>
</dbReference>
<dbReference type="InterPro" id="IPR020631">
    <property type="entry name" value="THF_DH/CycHdrlase_NAD-bd_dom"/>
</dbReference>
<dbReference type="NCBIfam" id="NF041156">
    <property type="entry name" value="FolD_Thplmales"/>
    <property type="match status" value="1"/>
</dbReference>
<dbReference type="PANTHER" id="PTHR48099:SF5">
    <property type="entry name" value="C-1-TETRAHYDROFOLATE SYNTHASE, CYTOPLASMIC"/>
    <property type="match status" value="1"/>
</dbReference>
<dbReference type="PANTHER" id="PTHR48099">
    <property type="entry name" value="C-1-TETRAHYDROFOLATE SYNTHASE, CYTOPLASMIC-RELATED"/>
    <property type="match status" value="1"/>
</dbReference>
<dbReference type="Pfam" id="PF00763">
    <property type="entry name" value="THF_DHG_CYH"/>
    <property type="match status" value="1"/>
</dbReference>
<dbReference type="Pfam" id="PF02882">
    <property type="entry name" value="THF_DHG_CYH_C"/>
    <property type="match status" value="1"/>
</dbReference>
<dbReference type="PRINTS" id="PR00085">
    <property type="entry name" value="THFDHDRGNASE"/>
</dbReference>
<dbReference type="SUPFAM" id="SSF53223">
    <property type="entry name" value="Aminoacid dehydrogenase-like, N-terminal domain"/>
    <property type="match status" value="1"/>
</dbReference>
<dbReference type="SUPFAM" id="SSF51735">
    <property type="entry name" value="NAD(P)-binding Rossmann-fold domains"/>
    <property type="match status" value="1"/>
</dbReference>
<dbReference type="PROSITE" id="PS00767">
    <property type="entry name" value="THF_DHG_CYH_2"/>
    <property type="match status" value="1"/>
</dbReference>
<organism>
    <name type="scientific">Thermoplasma acidophilum (strain ATCC 25905 / DSM 1728 / JCM 9062 / NBRC 15155 / AMRC-C165)</name>
    <dbReference type="NCBI Taxonomy" id="273075"/>
    <lineage>
        <taxon>Archaea</taxon>
        <taxon>Methanobacteriati</taxon>
        <taxon>Thermoplasmatota</taxon>
        <taxon>Thermoplasmata</taxon>
        <taxon>Thermoplasmatales</taxon>
        <taxon>Thermoplasmataceae</taxon>
        <taxon>Thermoplasma</taxon>
    </lineage>
</organism>
<comment type="function">
    <text evidence="1">Catalyzes the oxidation of 5,10-methylenetetrahydrofolate to 5,10-methenyltetrahydrofolate and then the hydrolysis of 5,10-methenyltetrahydrofolate to 10-formyltetrahydrofolate.</text>
</comment>
<comment type="catalytic activity">
    <reaction evidence="1">
        <text>(6R)-5,10-methylene-5,6,7,8-tetrahydrofolate + NADP(+) = (6R)-5,10-methenyltetrahydrofolate + NADPH</text>
        <dbReference type="Rhea" id="RHEA:22812"/>
        <dbReference type="ChEBI" id="CHEBI:15636"/>
        <dbReference type="ChEBI" id="CHEBI:57455"/>
        <dbReference type="ChEBI" id="CHEBI:57783"/>
        <dbReference type="ChEBI" id="CHEBI:58349"/>
        <dbReference type="EC" id="1.5.1.5"/>
    </reaction>
</comment>
<comment type="catalytic activity">
    <reaction evidence="1">
        <text>(6R)-5,10-methenyltetrahydrofolate + H2O = (6R)-10-formyltetrahydrofolate + H(+)</text>
        <dbReference type="Rhea" id="RHEA:23700"/>
        <dbReference type="ChEBI" id="CHEBI:15377"/>
        <dbReference type="ChEBI" id="CHEBI:15378"/>
        <dbReference type="ChEBI" id="CHEBI:57455"/>
        <dbReference type="ChEBI" id="CHEBI:195366"/>
        <dbReference type="EC" id="3.5.4.9"/>
    </reaction>
</comment>
<comment type="pathway">
    <text evidence="1">One-carbon metabolism; tetrahydrofolate interconversion.</text>
</comment>
<comment type="subunit">
    <text evidence="1 2">Homodimer.</text>
</comment>
<comment type="similarity">
    <text evidence="1">Belongs to the tetrahydrofolate dehydrogenase/cyclohydrolase family.</text>
</comment>
<comment type="sequence caution" evidence="3">
    <conflict type="frameshift">
        <sequence resource="EMBL-CDS" id="CAA42451"/>
    </conflict>
</comment>
<gene>
    <name evidence="1" type="primary">folD</name>
    <name type="ordered locus">Ta0898</name>
</gene>
<reference key="1">
    <citation type="journal article" date="2000" name="Nature">
        <title>The genome sequence of the thermoacidophilic scavenger Thermoplasma acidophilum.</title>
        <authorList>
            <person name="Ruepp A."/>
            <person name="Graml W."/>
            <person name="Santos-Martinez M.-L."/>
            <person name="Koretke K.K."/>
            <person name="Volker C."/>
            <person name="Mewes H.-W."/>
            <person name="Frishman D."/>
            <person name="Stocker S."/>
            <person name="Lupas A.N."/>
            <person name="Baumeister W."/>
        </authorList>
    </citation>
    <scope>NUCLEOTIDE SEQUENCE [LARGE SCALE GENOMIC DNA]</scope>
    <source>
        <strain>ATCC 25905 / DSM 1728 / JCM 9062 / NBRC 15155 / AMRC-C165</strain>
    </source>
</reference>
<reference key="2">
    <citation type="journal article" date="1993" name="Eur. J. Biochem.">
        <title>Cloning, sequencing and expression of the gene encoding glucose dehydrogenase from the thermophilic archaeon Thermoplasma acidophilum.</title>
        <authorList>
            <person name="Bright J.R."/>
            <person name="Byrom D."/>
            <person name="Danson M.J."/>
            <person name="Hough D.W."/>
            <person name="Towner P."/>
        </authorList>
    </citation>
    <scope>NUCLEOTIDE SEQUENCE [GENOMIC DNA] OF 1-82</scope>
    <source>
        <strain>ATCC 25905 / DSM 1728 / JCM 9062 / NBRC 15155 / AMRC-C165</strain>
    </source>
</reference>
<reference key="3">
    <citation type="journal article" date="2011" name="Biochem. Biophys. Res. Commun.">
        <title>Crystal structure of bifunctional 5,10-methylenetetrahydrofolate dehydrogenase/cyclohydrolase from Thermoplasma acidophilum.</title>
        <authorList>
            <person name="Lee W.H."/>
            <person name="Sung M.W."/>
            <person name="Kim J.H."/>
            <person name="Kim Y.K."/>
            <person name="Han A."/>
            <person name="Hwang K.Y."/>
        </authorList>
    </citation>
    <scope>X-RAY CRYSTALLOGRAPHY (2.3 ANGSTROMS) IN COMPLEX WITH NADP</scope>
    <scope>SUBUNIT</scope>
</reference>
<keyword id="KW-0002">3D-structure</keyword>
<keyword id="KW-0028">Amino-acid biosynthesis</keyword>
<keyword id="KW-0368">Histidine biosynthesis</keyword>
<keyword id="KW-0378">Hydrolase</keyword>
<keyword id="KW-0486">Methionine biosynthesis</keyword>
<keyword id="KW-0511">Multifunctional enzyme</keyword>
<keyword id="KW-0521">NADP</keyword>
<keyword id="KW-0554">One-carbon metabolism</keyword>
<keyword id="KW-0560">Oxidoreductase</keyword>
<keyword id="KW-0658">Purine biosynthesis</keyword>
<keyword id="KW-1185">Reference proteome</keyword>
<evidence type="ECO:0000255" key="1">
    <source>
        <dbReference type="HAMAP-Rule" id="MF_01576"/>
    </source>
</evidence>
<evidence type="ECO:0000269" key="2">
    <source>
    </source>
</evidence>
<evidence type="ECO:0000305" key="3"/>
<evidence type="ECO:0007829" key="4">
    <source>
        <dbReference type="PDB" id="3NGX"/>
    </source>
</evidence>
<name>FOLD_THEAC</name>